<accession>C3MVJ9</accession>
<gene>
    <name evidence="1" type="primary">rpl30</name>
    <name type="ordered locus">M1425_1441</name>
</gene>
<evidence type="ECO:0000255" key="1">
    <source>
        <dbReference type="HAMAP-Rule" id="MF_01371"/>
    </source>
</evidence>
<evidence type="ECO:0000305" key="2"/>
<comment type="subunit">
    <text evidence="1">Part of the 50S ribosomal subunit.</text>
</comment>
<comment type="similarity">
    <text evidence="1">Belongs to the universal ribosomal protein uL30 family.</text>
</comment>
<keyword id="KW-0687">Ribonucleoprotein</keyword>
<keyword id="KW-0689">Ribosomal protein</keyword>
<sequence>MVELLGIIRIRGWAKAPWYINETLEMLRLRYNFNTMMYPKTSQILGMLNKVSPYVTWGEIDPDTLKLLIIKRLETAKGDKVSDSYVKEVLKIENIDTMVKQLYEGKIYLHKLDQYFKLPIRLHPPKGGFKGSVKRPYKNKGEFGYRGDKINELMRRMM</sequence>
<feature type="chain" id="PRO_1000215078" description="Large ribosomal subunit protein uL30">
    <location>
        <begin position="1"/>
        <end position="158"/>
    </location>
</feature>
<proteinExistence type="inferred from homology"/>
<reference key="1">
    <citation type="journal article" date="2009" name="Proc. Natl. Acad. Sci. U.S.A.">
        <title>Biogeography of the Sulfolobus islandicus pan-genome.</title>
        <authorList>
            <person name="Reno M.L."/>
            <person name="Held N.L."/>
            <person name="Fields C.J."/>
            <person name="Burke P.V."/>
            <person name="Whitaker R.J."/>
        </authorList>
    </citation>
    <scope>NUCLEOTIDE SEQUENCE [LARGE SCALE GENOMIC DNA]</scope>
    <source>
        <strain>M.14.25 / Kamchatka #1</strain>
    </source>
</reference>
<name>RL30_SACI4</name>
<organism>
    <name type="scientific">Saccharolobus islandicus (strain M.14.25 / Kamchatka #1)</name>
    <name type="common">Sulfolobus islandicus</name>
    <dbReference type="NCBI Taxonomy" id="427317"/>
    <lineage>
        <taxon>Archaea</taxon>
        <taxon>Thermoproteota</taxon>
        <taxon>Thermoprotei</taxon>
        <taxon>Sulfolobales</taxon>
        <taxon>Sulfolobaceae</taxon>
        <taxon>Saccharolobus</taxon>
    </lineage>
</organism>
<protein>
    <recommendedName>
        <fullName evidence="1">Large ribosomal subunit protein uL30</fullName>
    </recommendedName>
    <alternativeName>
        <fullName evidence="2">50S ribosomal protein L30</fullName>
    </alternativeName>
</protein>
<dbReference type="EMBL" id="CP001400">
    <property type="protein sequence ID" value="ACP38194.1"/>
    <property type="molecule type" value="Genomic_DNA"/>
</dbReference>
<dbReference type="SMR" id="C3MVJ9"/>
<dbReference type="KEGG" id="sia:M1425_1441"/>
<dbReference type="HOGENOM" id="CLU_055156_6_0_2"/>
<dbReference type="Proteomes" id="UP000001350">
    <property type="component" value="Chromosome"/>
</dbReference>
<dbReference type="GO" id="GO:0022625">
    <property type="term" value="C:cytosolic large ribosomal subunit"/>
    <property type="evidence" value="ECO:0007669"/>
    <property type="project" value="TreeGrafter"/>
</dbReference>
<dbReference type="GO" id="GO:0003723">
    <property type="term" value="F:RNA binding"/>
    <property type="evidence" value="ECO:0007669"/>
    <property type="project" value="TreeGrafter"/>
</dbReference>
<dbReference type="GO" id="GO:0003735">
    <property type="term" value="F:structural constituent of ribosome"/>
    <property type="evidence" value="ECO:0007669"/>
    <property type="project" value="InterPro"/>
</dbReference>
<dbReference type="GO" id="GO:0000463">
    <property type="term" value="P:maturation of LSU-rRNA from tricistronic rRNA transcript (SSU-rRNA, 5.8S rRNA, LSU-rRNA)"/>
    <property type="evidence" value="ECO:0007669"/>
    <property type="project" value="TreeGrafter"/>
</dbReference>
<dbReference type="GO" id="GO:0006412">
    <property type="term" value="P:translation"/>
    <property type="evidence" value="ECO:0007669"/>
    <property type="project" value="UniProtKB-UniRule"/>
</dbReference>
<dbReference type="CDD" id="cd01657">
    <property type="entry name" value="Ribosomal_L7_archeal_euk"/>
    <property type="match status" value="1"/>
</dbReference>
<dbReference type="Gene3D" id="1.10.15.30">
    <property type="match status" value="1"/>
</dbReference>
<dbReference type="Gene3D" id="3.30.1390.20">
    <property type="entry name" value="Ribosomal protein L30, ferredoxin-like fold domain"/>
    <property type="match status" value="1"/>
</dbReference>
<dbReference type="HAMAP" id="MF_01371_A">
    <property type="entry name" value="Ribosomal_uL30_A"/>
    <property type="match status" value="1"/>
</dbReference>
<dbReference type="InterPro" id="IPR036919">
    <property type="entry name" value="Ribo_uL30_ferredoxin-like_sf"/>
</dbReference>
<dbReference type="InterPro" id="IPR039699">
    <property type="entry name" value="Ribosomal_uL30"/>
</dbReference>
<dbReference type="InterPro" id="IPR005997">
    <property type="entry name" value="Ribosomal_uL30_arc"/>
</dbReference>
<dbReference type="InterPro" id="IPR035808">
    <property type="entry name" value="Ribosomal_uL30_euk_arc"/>
</dbReference>
<dbReference type="InterPro" id="IPR016082">
    <property type="entry name" value="Ribosomal_uL30_ferredoxin-like"/>
</dbReference>
<dbReference type="NCBIfam" id="NF004711">
    <property type="entry name" value="PRK06049.1"/>
    <property type="match status" value="1"/>
</dbReference>
<dbReference type="NCBIfam" id="TIGR01309">
    <property type="entry name" value="uL30_arch"/>
    <property type="match status" value="1"/>
</dbReference>
<dbReference type="PANTHER" id="PTHR11524">
    <property type="entry name" value="60S RIBOSOMAL PROTEIN L7"/>
    <property type="match status" value="1"/>
</dbReference>
<dbReference type="PANTHER" id="PTHR11524:SF16">
    <property type="entry name" value="LARGE RIBOSOMAL SUBUNIT PROTEIN UL30"/>
    <property type="match status" value="1"/>
</dbReference>
<dbReference type="Pfam" id="PF00327">
    <property type="entry name" value="Ribosomal_L30"/>
    <property type="match status" value="1"/>
</dbReference>
<dbReference type="SUPFAM" id="SSF55129">
    <property type="entry name" value="Ribosomal protein L30p/L7e"/>
    <property type="match status" value="1"/>
</dbReference>